<gene>
    <name evidence="1" type="primary">prfB</name>
    <name type="ordered locus">ECDH10B_3065</name>
</gene>
<proteinExistence type="inferred from homology"/>
<dbReference type="EMBL" id="CP000948">
    <property type="protein sequence ID" value="ACB03994.1"/>
    <property type="molecule type" value="Genomic_DNA"/>
</dbReference>
<dbReference type="RefSeq" id="WP_010723217.1">
    <property type="nucleotide sequence ID" value="NC_010473.1"/>
</dbReference>
<dbReference type="SMR" id="B1XEH8"/>
<dbReference type="KEGG" id="ecd:ECDH10B_3065"/>
<dbReference type="HOGENOM" id="CLU_220733_1_0_6"/>
<dbReference type="GO" id="GO:0005737">
    <property type="term" value="C:cytoplasm"/>
    <property type="evidence" value="ECO:0007669"/>
    <property type="project" value="UniProtKB-SubCell"/>
</dbReference>
<dbReference type="GO" id="GO:0016149">
    <property type="term" value="F:translation release factor activity, codon specific"/>
    <property type="evidence" value="ECO:0007669"/>
    <property type="project" value="UniProtKB-UniRule"/>
</dbReference>
<dbReference type="FunFam" id="1.20.58.410:FF:000001">
    <property type="entry name" value="Peptide chain release factor 2"/>
    <property type="match status" value="1"/>
</dbReference>
<dbReference type="FunFam" id="3.30.160.20:FF:000010">
    <property type="entry name" value="Peptide chain release factor 2"/>
    <property type="match status" value="1"/>
</dbReference>
<dbReference type="Gene3D" id="3.30.160.20">
    <property type="match status" value="1"/>
</dbReference>
<dbReference type="Gene3D" id="3.30.70.1660">
    <property type="match status" value="1"/>
</dbReference>
<dbReference type="Gene3D" id="1.20.58.410">
    <property type="entry name" value="Release factor"/>
    <property type="match status" value="1"/>
</dbReference>
<dbReference type="HAMAP" id="MF_00094">
    <property type="entry name" value="Rel_fac_2"/>
    <property type="match status" value="1"/>
</dbReference>
<dbReference type="InterPro" id="IPR005139">
    <property type="entry name" value="PCRF"/>
</dbReference>
<dbReference type="InterPro" id="IPR000352">
    <property type="entry name" value="Pep_chain_release_fac_I"/>
</dbReference>
<dbReference type="InterPro" id="IPR045853">
    <property type="entry name" value="Pep_chain_release_fac_I_sf"/>
</dbReference>
<dbReference type="InterPro" id="IPR004374">
    <property type="entry name" value="PrfB"/>
</dbReference>
<dbReference type="NCBIfam" id="TIGR00020">
    <property type="entry name" value="prfB"/>
    <property type="match status" value="1"/>
</dbReference>
<dbReference type="PANTHER" id="PTHR43116:SF3">
    <property type="entry name" value="CLASS I PEPTIDE CHAIN RELEASE FACTOR"/>
    <property type="match status" value="1"/>
</dbReference>
<dbReference type="PANTHER" id="PTHR43116">
    <property type="entry name" value="PEPTIDE CHAIN RELEASE FACTOR 2"/>
    <property type="match status" value="1"/>
</dbReference>
<dbReference type="Pfam" id="PF03462">
    <property type="entry name" value="PCRF"/>
    <property type="match status" value="1"/>
</dbReference>
<dbReference type="Pfam" id="PF00472">
    <property type="entry name" value="RF-1"/>
    <property type="match status" value="1"/>
</dbReference>
<dbReference type="SMART" id="SM00937">
    <property type="entry name" value="PCRF"/>
    <property type="match status" value="1"/>
</dbReference>
<dbReference type="SUPFAM" id="SSF75620">
    <property type="entry name" value="Release factor"/>
    <property type="match status" value="1"/>
</dbReference>
<dbReference type="PROSITE" id="PS00745">
    <property type="entry name" value="RF_PROK_I"/>
    <property type="match status" value="1"/>
</dbReference>
<organism>
    <name type="scientific">Escherichia coli (strain K12 / DH10B)</name>
    <dbReference type="NCBI Taxonomy" id="316385"/>
    <lineage>
        <taxon>Bacteria</taxon>
        <taxon>Pseudomonadati</taxon>
        <taxon>Pseudomonadota</taxon>
        <taxon>Gammaproteobacteria</taxon>
        <taxon>Enterobacterales</taxon>
        <taxon>Enterobacteriaceae</taxon>
        <taxon>Escherichia</taxon>
    </lineage>
</organism>
<accession>B1XEH8</accession>
<keyword id="KW-0963">Cytoplasm</keyword>
<keyword id="KW-0488">Methylation</keyword>
<keyword id="KW-0648">Protein biosynthesis</keyword>
<evidence type="ECO:0000255" key="1">
    <source>
        <dbReference type="HAMAP-Rule" id="MF_00094"/>
    </source>
</evidence>
<reference key="1">
    <citation type="journal article" date="2008" name="J. Bacteriol.">
        <title>The complete genome sequence of Escherichia coli DH10B: insights into the biology of a laboratory workhorse.</title>
        <authorList>
            <person name="Durfee T."/>
            <person name="Nelson R."/>
            <person name="Baldwin S."/>
            <person name="Plunkett G. III"/>
            <person name="Burland V."/>
            <person name="Mau B."/>
            <person name="Petrosino J.F."/>
            <person name="Qin X."/>
            <person name="Muzny D.M."/>
            <person name="Ayele M."/>
            <person name="Gibbs R.A."/>
            <person name="Csorgo B."/>
            <person name="Posfai G."/>
            <person name="Weinstock G.M."/>
            <person name="Blattner F.R."/>
        </authorList>
    </citation>
    <scope>NUCLEOTIDE SEQUENCE [LARGE SCALE GENOMIC DNA]</scope>
    <source>
        <strain>K12 / DH10B</strain>
    </source>
</reference>
<sequence>MFEINPVNNRIQDLTERSDVLRGYLDYDAKKERLEEVNAELEQPDVWNEPERAQALGKERSSLEAVVDTLDQMKQGLEDVSGLLELAVEADDEETFNEAVAELDALEEKLAQLEFRRMFSGEYDSADCYLDIQAGSGGTEAQDWASMLERMYLRWAESRGFKTEIIEESEGEVAGIKSVTIKISGDYAYGWLRTETGVHRLVRKSPFDSGGRRHTSFSSAFVYPEVDDDIDIEINPADLRIDVYRTSGAGGQHVNRTESAVRITHIPTGIVTQCQNDRSQHKNKDQAMKQMKAKLYELEMQKKNAEKQAMEDNKSDIGWGSQIRSYVLDDSRIKDLRTGVETRNTQAVLDGSLDQFIEASLKAGL</sequence>
<feature type="chain" id="PRO_1000093538" description="Peptide chain release factor 2">
    <location>
        <begin position="1"/>
        <end position="365"/>
    </location>
</feature>
<feature type="modified residue" description="N5-methylglutamine" evidence="1">
    <location>
        <position position="252"/>
    </location>
</feature>
<comment type="function">
    <text evidence="1">Peptide chain release factor 2 directs the termination of translation in response to the peptide chain termination codons UGA and UAA.</text>
</comment>
<comment type="subcellular location">
    <subcellularLocation>
        <location evidence="1">Cytoplasm</location>
    </subcellularLocation>
</comment>
<comment type="PTM">
    <text evidence="1">Methylated by PrmC. Methylation increases the termination efficiency of RF2.</text>
</comment>
<comment type="similarity">
    <text evidence="1">Belongs to the prokaryotic/mitochondrial release factor family.</text>
</comment>
<name>RF2_ECODH</name>
<protein>
    <recommendedName>
        <fullName evidence="1">Peptide chain release factor 2</fullName>
        <shortName evidence="1">RF-2</shortName>
    </recommendedName>
</protein>